<name>HIS6_SHEB9</name>
<protein>
    <recommendedName>
        <fullName evidence="1">Imidazole glycerol phosphate synthase subunit HisF</fullName>
        <ecNumber evidence="1">4.3.2.10</ecNumber>
    </recommendedName>
    <alternativeName>
        <fullName evidence="1">IGP synthase cyclase subunit</fullName>
    </alternativeName>
    <alternativeName>
        <fullName evidence="1">IGP synthase subunit HisF</fullName>
    </alternativeName>
    <alternativeName>
        <fullName evidence="1">ImGP synthase subunit HisF</fullName>
        <shortName evidence="1">IGPS subunit HisF</shortName>
    </alternativeName>
</protein>
<organism>
    <name type="scientific">Shewanella baltica (strain OS195)</name>
    <dbReference type="NCBI Taxonomy" id="399599"/>
    <lineage>
        <taxon>Bacteria</taxon>
        <taxon>Pseudomonadati</taxon>
        <taxon>Pseudomonadota</taxon>
        <taxon>Gammaproteobacteria</taxon>
        <taxon>Alteromonadales</taxon>
        <taxon>Shewanellaceae</taxon>
        <taxon>Shewanella</taxon>
    </lineage>
</organism>
<gene>
    <name evidence="1" type="primary">hisF</name>
    <name type="ordered locus">Sbal195_2542</name>
</gene>
<sequence>MLAKRLVPCLDVKDGKVVKGVQFRNHEIVGDIVPLAARYAEEGADELVFYDITASAHERVVDKSWVSRVAEQIDIPFCVAGGIKTISQARELLAFGADKISINSPALTDPSLISRLQDEFGRQCIVIGIDSFFDATSNSYKVKQFTGDEAATKDTQWFTQDWVEEVQKRGCGEIVLNVMNQDGVRGGYDIKQLSLVRAICDVPLIASGGAGTMAHFRDVFIEAKVDAALAASVFHKAIINIGELKAYLAAEGIAIRR</sequence>
<reference key="1">
    <citation type="submission" date="2007-11" db="EMBL/GenBank/DDBJ databases">
        <title>Complete sequence of chromosome of Shewanella baltica OS195.</title>
        <authorList>
            <consortium name="US DOE Joint Genome Institute"/>
            <person name="Copeland A."/>
            <person name="Lucas S."/>
            <person name="Lapidus A."/>
            <person name="Barry K."/>
            <person name="Glavina del Rio T."/>
            <person name="Dalin E."/>
            <person name="Tice H."/>
            <person name="Pitluck S."/>
            <person name="Chain P."/>
            <person name="Malfatti S."/>
            <person name="Shin M."/>
            <person name="Vergez L."/>
            <person name="Schmutz J."/>
            <person name="Larimer F."/>
            <person name="Land M."/>
            <person name="Hauser L."/>
            <person name="Kyrpides N."/>
            <person name="Kim E."/>
            <person name="Brettar I."/>
            <person name="Rodrigues J."/>
            <person name="Konstantinidis K."/>
            <person name="Klappenbach J."/>
            <person name="Hofle M."/>
            <person name="Tiedje J."/>
            <person name="Richardson P."/>
        </authorList>
    </citation>
    <scope>NUCLEOTIDE SEQUENCE [LARGE SCALE GENOMIC DNA]</scope>
    <source>
        <strain>OS195</strain>
    </source>
</reference>
<keyword id="KW-0028">Amino-acid biosynthesis</keyword>
<keyword id="KW-0963">Cytoplasm</keyword>
<keyword id="KW-0368">Histidine biosynthesis</keyword>
<keyword id="KW-0456">Lyase</keyword>
<accession>A9L4C0</accession>
<feature type="chain" id="PRO_1000084078" description="Imidazole glycerol phosphate synthase subunit HisF">
    <location>
        <begin position="1"/>
        <end position="257"/>
    </location>
</feature>
<feature type="active site" evidence="1">
    <location>
        <position position="11"/>
    </location>
</feature>
<feature type="active site" evidence="1">
    <location>
        <position position="130"/>
    </location>
</feature>
<proteinExistence type="inferred from homology"/>
<evidence type="ECO:0000255" key="1">
    <source>
        <dbReference type="HAMAP-Rule" id="MF_01013"/>
    </source>
</evidence>
<dbReference type="EC" id="4.3.2.10" evidence="1"/>
<dbReference type="EMBL" id="CP000891">
    <property type="protein sequence ID" value="ABX49710.1"/>
    <property type="molecule type" value="Genomic_DNA"/>
</dbReference>
<dbReference type="RefSeq" id="WP_006081894.1">
    <property type="nucleotide sequence ID" value="NC_009997.1"/>
</dbReference>
<dbReference type="SMR" id="A9L4C0"/>
<dbReference type="GeneID" id="11772644"/>
<dbReference type="KEGG" id="sbn:Sbal195_2542"/>
<dbReference type="HOGENOM" id="CLU_048577_4_0_6"/>
<dbReference type="UniPathway" id="UPA00031">
    <property type="reaction ID" value="UER00010"/>
</dbReference>
<dbReference type="Proteomes" id="UP000000770">
    <property type="component" value="Chromosome"/>
</dbReference>
<dbReference type="GO" id="GO:0005737">
    <property type="term" value="C:cytoplasm"/>
    <property type="evidence" value="ECO:0007669"/>
    <property type="project" value="UniProtKB-SubCell"/>
</dbReference>
<dbReference type="GO" id="GO:0000107">
    <property type="term" value="F:imidazoleglycerol-phosphate synthase activity"/>
    <property type="evidence" value="ECO:0007669"/>
    <property type="project" value="UniProtKB-UniRule"/>
</dbReference>
<dbReference type="GO" id="GO:0016829">
    <property type="term" value="F:lyase activity"/>
    <property type="evidence" value="ECO:0007669"/>
    <property type="project" value="UniProtKB-KW"/>
</dbReference>
<dbReference type="GO" id="GO:0000105">
    <property type="term" value="P:L-histidine biosynthetic process"/>
    <property type="evidence" value="ECO:0007669"/>
    <property type="project" value="UniProtKB-UniRule"/>
</dbReference>
<dbReference type="CDD" id="cd04731">
    <property type="entry name" value="HisF"/>
    <property type="match status" value="1"/>
</dbReference>
<dbReference type="FunFam" id="3.20.20.70:FF:000006">
    <property type="entry name" value="Imidazole glycerol phosphate synthase subunit HisF"/>
    <property type="match status" value="1"/>
</dbReference>
<dbReference type="Gene3D" id="3.20.20.70">
    <property type="entry name" value="Aldolase class I"/>
    <property type="match status" value="1"/>
</dbReference>
<dbReference type="HAMAP" id="MF_01013">
    <property type="entry name" value="HisF"/>
    <property type="match status" value="1"/>
</dbReference>
<dbReference type="InterPro" id="IPR013785">
    <property type="entry name" value="Aldolase_TIM"/>
</dbReference>
<dbReference type="InterPro" id="IPR006062">
    <property type="entry name" value="His_biosynth"/>
</dbReference>
<dbReference type="InterPro" id="IPR004651">
    <property type="entry name" value="HisF"/>
</dbReference>
<dbReference type="InterPro" id="IPR050064">
    <property type="entry name" value="IGPS_HisA/HisF"/>
</dbReference>
<dbReference type="InterPro" id="IPR011060">
    <property type="entry name" value="RibuloseP-bd_barrel"/>
</dbReference>
<dbReference type="NCBIfam" id="TIGR00735">
    <property type="entry name" value="hisF"/>
    <property type="match status" value="1"/>
</dbReference>
<dbReference type="PANTHER" id="PTHR21235:SF2">
    <property type="entry name" value="IMIDAZOLE GLYCEROL PHOSPHATE SYNTHASE HISHF"/>
    <property type="match status" value="1"/>
</dbReference>
<dbReference type="PANTHER" id="PTHR21235">
    <property type="entry name" value="IMIDAZOLE GLYCEROL PHOSPHATE SYNTHASE SUBUNIT HISF/H IGP SYNTHASE SUBUNIT HISF/H"/>
    <property type="match status" value="1"/>
</dbReference>
<dbReference type="Pfam" id="PF00977">
    <property type="entry name" value="His_biosynth"/>
    <property type="match status" value="1"/>
</dbReference>
<dbReference type="SUPFAM" id="SSF51366">
    <property type="entry name" value="Ribulose-phoshate binding barrel"/>
    <property type="match status" value="1"/>
</dbReference>
<comment type="function">
    <text evidence="1">IGPS catalyzes the conversion of PRFAR and glutamine to IGP, AICAR and glutamate. The HisF subunit catalyzes the cyclization activity that produces IGP and AICAR from PRFAR using the ammonia provided by the HisH subunit.</text>
</comment>
<comment type="catalytic activity">
    <reaction evidence="1">
        <text>5-[(5-phospho-1-deoxy-D-ribulos-1-ylimino)methylamino]-1-(5-phospho-beta-D-ribosyl)imidazole-4-carboxamide + L-glutamine = D-erythro-1-(imidazol-4-yl)glycerol 3-phosphate + 5-amino-1-(5-phospho-beta-D-ribosyl)imidazole-4-carboxamide + L-glutamate + H(+)</text>
        <dbReference type="Rhea" id="RHEA:24793"/>
        <dbReference type="ChEBI" id="CHEBI:15378"/>
        <dbReference type="ChEBI" id="CHEBI:29985"/>
        <dbReference type="ChEBI" id="CHEBI:58278"/>
        <dbReference type="ChEBI" id="CHEBI:58359"/>
        <dbReference type="ChEBI" id="CHEBI:58475"/>
        <dbReference type="ChEBI" id="CHEBI:58525"/>
        <dbReference type="EC" id="4.3.2.10"/>
    </reaction>
</comment>
<comment type="pathway">
    <text evidence="1">Amino-acid biosynthesis; L-histidine biosynthesis; L-histidine from 5-phospho-alpha-D-ribose 1-diphosphate: step 5/9.</text>
</comment>
<comment type="subunit">
    <text evidence="1">Heterodimer of HisH and HisF.</text>
</comment>
<comment type="subcellular location">
    <subcellularLocation>
        <location evidence="1">Cytoplasm</location>
    </subcellularLocation>
</comment>
<comment type="similarity">
    <text evidence="1">Belongs to the HisA/HisF family.</text>
</comment>